<comment type="function">
    <text evidence="1">Rab effector protein involved in melanosome transport. Serves as link between melanosome-bound RAB27A and the motor protein MYO5A.</text>
</comment>
<comment type="subunit">
    <text evidence="1">Binds RAB27A that has been activated by GTP-binding via its N-terminus. Binds MYO5A via its C-terminal coiled coil domain.</text>
</comment>
<comment type="subcellular location">
    <subcellularLocation>
        <location evidence="1">Melanosome</location>
    </subcellularLocation>
</comment>
<comment type="polymorphism">
    <text evidence="4">An allelic variation in MLPH, resulting in a severely truncated protein, has been shown to be associated with the dilute coat color phenotype. This trait is autosomal recessive.</text>
</comment>
<name>MELPH_FELCA</name>
<proteinExistence type="evidence at transcript level"/>
<accession>M3WHG5</accession>
<accession>A0A2I2U8R1</accession>
<accession>A0SJ36</accession>
<accession>A0SJ37</accession>
<feature type="chain" id="PRO_0000452322" description="Melanophilin">
    <location>
        <begin position="1"/>
        <end position="569"/>
    </location>
</feature>
<feature type="domain" description="RabBD" evidence="5">
    <location>
        <begin position="4"/>
        <end position="124"/>
    </location>
</feature>
<feature type="zinc finger region" description="FYVE-type" evidence="5">
    <location>
        <begin position="58"/>
        <end position="112"/>
    </location>
</feature>
<feature type="region of interest" description="Disordered" evidence="3">
    <location>
        <begin position="143"/>
        <end position="430"/>
    </location>
</feature>
<feature type="region of interest" description="Disordered" evidence="3">
    <location>
        <begin position="490"/>
        <end position="569"/>
    </location>
</feature>
<feature type="coiled-coil region" evidence="2">
    <location>
        <begin position="431"/>
        <end position="465"/>
    </location>
</feature>
<feature type="compositionally biased region" description="Basic and acidic residues" evidence="3">
    <location>
        <begin position="352"/>
        <end position="362"/>
    </location>
</feature>
<feature type="compositionally biased region" description="Basic and acidic residues" evidence="3">
    <location>
        <begin position="379"/>
        <end position="390"/>
    </location>
</feature>
<feature type="compositionally biased region" description="Polar residues" evidence="3">
    <location>
        <begin position="404"/>
        <end position="415"/>
    </location>
</feature>
<feature type="compositionally biased region" description="Basic and acidic residues" evidence="3">
    <location>
        <begin position="526"/>
        <end position="535"/>
    </location>
</feature>
<feature type="sequence variant" description="Associated with the dilute coat color phenotype." evidence="4">
    <original>LRRKEEERLGGLKDRIKKESSQRELLSDAAHLNETHCARCLQPYRLLVAPKRQCLDCHLFTCQDCSHAHPEEEGWLCDPCHLARVVKMGSLEWYYGHLRARFKRFGSAKVIRSLCGRLQGGGGPEPSPGEGSGDSEQTEEDGELDTVAQAQPLGSKKKRLSIHGLDFDADSDGSTQSSGHPPYLSPVPMATDSLQTLTGEPRAKDTSQEAVVLEEADVGAPGCHPHPEEQTDSLSAARQDTLTEPRFPRQSCTTALGLAVTPGPGVISSSERLSSRYPADEGTSDDEDTGADGVASQSLTWRDCAPAESQHLTGHQPTDADREEETLKRKLEEMTSHISDQGASSEEEGSKEEEAGLNRKTSIEDLPGAAPEVLVASGQTSRQETSPRGPQELMQPGRTTDQELLELEDRVAVTASEVQQVESEVSNIKSKIAALQAAGLSVRPSGKPQRRSNLPIFLPRLVGRLGQTPKDPNAEPSDEVKVMTAPYLLRRKFSNPPKSQDKAGDSFDRQSAYRGSLTQRNPNSRKGVANHSFAKPVMTQRP</original>
    <variation>REGKKRKGWGD</variation>
    <location>
        <begin position="28"/>
        <end position="569"/>
    </location>
</feature>
<feature type="sequence variant" evidence="4">
    <original>S</original>
    <variation>G</variation>
    <location>
        <position position="205"/>
    </location>
</feature>
<feature type="sequence variant" evidence="4">
    <original>T</original>
    <variation>A</variation>
    <location>
        <position position="223"/>
    </location>
</feature>
<feature type="sequence variant" evidence="4">
    <original>P</original>
    <variation>S</variation>
    <location>
        <position position="228"/>
    </location>
</feature>
<feature type="sequence variant" evidence="4">
    <original>C</original>
    <variation>F</variation>
    <location>
        <position position="250"/>
    </location>
</feature>
<feature type="sequence variant" evidence="4">
    <original>C</original>
    <variation>L</variation>
    <location>
        <position position="250"/>
    </location>
</feature>
<feature type="sequence variant" evidence="4">
    <original>C</original>
    <variation>R</variation>
    <location>
        <position position="250"/>
    </location>
</feature>
<feature type="sequence variant" evidence="4">
    <original>S</original>
    <variation>A</variation>
    <location>
        <position position="404"/>
    </location>
</feature>
<organism>
    <name type="scientific">Felis catus</name>
    <name type="common">Cat</name>
    <name type="synonym">Felis silvestris catus</name>
    <dbReference type="NCBI Taxonomy" id="9685"/>
    <lineage>
        <taxon>Eukaryota</taxon>
        <taxon>Metazoa</taxon>
        <taxon>Chordata</taxon>
        <taxon>Craniata</taxon>
        <taxon>Vertebrata</taxon>
        <taxon>Euteleostomi</taxon>
        <taxon>Mammalia</taxon>
        <taxon>Eutheria</taxon>
        <taxon>Laurasiatheria</taxon>
        <taxon>Carnivora</taxon>
        <taxon>Feliformia</taxon>
        <taxon>Felidae</taxon>
        <taxon>Felinae</taxon>
        <taxon>Felis</taxon>
    </lineage>
</organism>
<protein>
    <recommendedName>
        <fullName>Melanophilin</fullName>
    </recommendedName>
    <alternativeName>
        <fullName>Exophilin-3</fullName>
    </alternativeName>
    <alternativeName>
        <fullName>Slp homolog lacking C2 domains a</fullName>
        <shortName>SlaC2-a</shortName>
    </alternativeName>
    <alternativeName>
        <fullName>Synaptotagmin-like protein 2a</fullName>
    </alternativeName>
</protein>
<evidence type="ECO:0000250" key="1">
    <source>
        <dbReference type="UniProtKB" id="Q91V27"/>
    </source>
</evidence>
<evidence type="ECO:0000255" key="2"/>
<evidence type="ECO:0000256" key="3">
    <source>
        <dbReference type="SAM" id="MobiDB-lite"/>
    </source>
</evidence>
<evidence type="ECO:0000269" key="4">
    <source>
    </source>
</evidence>
<evidence type="ECO:0000305" key="5"/>
<gene>
    <name type="primary">MLPH</name>
</gene>
<sequence>MGKKLDLSKLTDDEAKHIWEVVQRDFDLRRKEEERLGGLKDRIKKESSQRELLSDAAHLNETHCARCLQPYRLLVAPKRQCLDCHLFTCQDCSHAHPEEEGWLCDPCHLARVVKMGSLEWYYGHLRARFKRFGSAKVIRSLCGRLQGGGGPEPSPGEGSGDSEQTEEDGELDTVAQAQPLGSKKKRLSIHGLDFDADSDGSTQSSGHPPYLSPVPMATDSLQTLTGEPRAKDTSQEAVVLEEADVGAPGCHPHPEEQTDSLSAARQDTLTEPRFPRQSCTTALGLAVTPGPGVISSSERLSSRYPADEGTSDDEDTGADGVASQSLTWRDCAPAESQHLTGHQPTDADREEETLKRKLEEMTSHISDQGASSEEEGSKEEEAGLNRKTSIEDLPGAAPEVLVASGQTSRQETSPRGPQELMQPGRTTDQELLELEDRVAVTASEVQQVESEVSNIKSKIAALQAAGLSVRPSGKPQRRSNLPIFLPRLVGRLGQTPKDPNAEPSDEVKVMTAPYLLRRKFSNPPKSQDKAGDSFDRQSAYRGSLTQRNPNSRKGVANHSFAKPVMTQRP</sequence>
<reference key="1">
    <citation type="journal article" date="2006" name="Genomics">
        <title>A homozygous single-base deletion in MLPH causes the dilute coat color phenotype in the domestic cat.</title>
        <authorList>
            <person name="Ishida Y."/>
            <person name="David V.A."/>
            <person name="Eizirik E."/>
            <person name="Schaffer A.A."/>
            <person name="Neelam B.A."/>
            <person name="Roelke M.E."/>
            <person name="Hannah S.S."/>
            <person name="O'Brien S.J."/>
            <person name="Menotti-Raymond M."/>
        </authorList>
    </citation>
    <scope>NUCLEOTIDE SEQUENCE [MRNA]</scope>
    <scope>POLYMORPHISM</scope>
    <scope>VARIANTS 28-LEU--PRO-569 DELINS ARG-GLU-GLY-LYS-LYS-ARG-LYS-GLY-TRP-GLY-ASP; GLY-205; ALA-223; SER-228; ARG-250; LEU-250; PHE-250 AND ALA-404</scope>
</reference>
<reference key="2">
    <citation type="journal article" date="2007" name="Genome Res.">
        <title>Initial sequence and comparative analysis of the cat genome.</title>
        <authorList>
            <person name="Pontius J.U."/>
            <person name="Mullikin J.C."/>
            <person name="Smith D.R."/>
            <person name="Lindblad-Toh K."/>
            <person name="Gnerre S."/>
            <person name="Clamp M."/>
            <person name="Chang J."/>
            <person name="Stephens R."/>
            <person name="Neelam B."/>
            <person name="Volfovsky N."/>
            <person name="Schaffer A.A."/>
            <person name="Agarwala R."/>
            <person name="Narfstrom K."/>
            <person name="Murphy W.J."/>
            <person name="Giger U."/>
            <person name="Roca A.L."/>
            <person name="Antunes A."/>
            <person name="Menotti-Raymond M."/>
            <person name="Yuhki N."/>
            <person name="Pecon-Slattery J."/>
            <person name="Johnson W.E."/>
            <person name="Bourque G."/>
            <person name="Tesler G."/>
            <person name="O'Brien S.J."/>
        </authorList>
    </citation>
    <scope>NUCLEOTIDE SEQUENCE [LARGE SCALE GENOMIC DNA]</scope>
    <source>
        <strain>Abyssinian</strain>
    </source>
</reference>
<dbReference type="EMBL" id="DQ469741">
    <property type="protein sequence ID" value="ABF06442.1"/>
    <property type="molecule type" value="mRNA"/>
</dbReference>
<dbReference type="EMBL" id="DQ469742">
    <property type="protein sequence ID" value="ABF06443.1"/>
    <property type="molecule type" value="mRNA"/>
</dbReference>
<dbReference type="EMBL" id="AANG04002752">
    <property type="status" value="NOT_ANNOTATED_CDS"/>
    <property type="molecule type" value="Genomic_DNA"/>
</dbReference>
<dbReference type="RefSeq" id="NP_001073123.1">
    <property type="nucleotide sequence ID" value="NM_001079655.1"/>
</dbReference>
<dbReference type="SMR" id="M3WHG5"/>
<dbReference type="Ensembl" id="ENSFCAT00000012725.6">
    <property type="protein sequence ID" value="ENSFCAP00000011795.5"/>
    <property type="gene ID" value="ENSFCAG00000012722.6"/>
</dbReference>
<dbReference type="GeneID" id="780791"/>
<dbReference type="KEGG" id="fca:780791"/>
<dbReference type="CTD" id="79083"/>
<dbReference type="VGNC" id="VGNC:63526">
    <property type="gene designation" value="MLPH"/>
</dbReference>
<dbReference type="GeneTree" id="ENSGT00950000183138"/>
<dbReference type="HOGENOM" id="CLU_025193_2_0_1"/>
<dbReference type="InParanoid" id="M3WHG5"/>
<dbReference type="OrthoDB" id="10072397at2759"/>
<dbReference type="Proteomes" id="UP000011712">
    <property type="component" value="Chromosome C1"/>
</dbReference>
<dbReference type="Bgee" id="ENSFCAG00000012722">
    <property type="expression patterns" value="Expressed in eyeball of camera-type eye and 7 other cell types or tissues"/>
</dbReference>
<dbReference type="GO" id="GO:0030864">
    <property type="term" value="C:cortical actin cytoskeleton"/>
    <property type="evidence" value="ECO:0000318"/>
    <property type="project" value="GO_Central"/>
</dbReference>
<dbReference type="GO" id="GO:0042470">
    <property type="term" value="C:melanosome"/>
    <property type="evidence" value="ECO:0007669"/>
    <property type="project" value="UniProtKB-SubCell"/>
</dbReference>
<dbReference type="GO" id="GO:0003779">
    <property type="term" value="F:actin binding"/>
    <property type="evidence" value="ECO:0000318"/>
    <property type="project" value="GO_Central"/>
</dbReference>
<dbReference type="GO" id="GO:0017022">
    <property type="term" value="F:myosin binding"/>
    <property type="evidence" value="ECO:0000318"/>
    <property type="project" value="GO_Central"/>
</dbReference>
<dbReference type="GO" id="GO:0031267">
    <property type="term" value="F:small GTPase binding"/>
    <property type="evidence" value="ECO:0007669"/>
    <property type="project" value="InterPro"/>
</dbReference>
<dbReference type="GO" id="GO:0008270">
    <property type="term" value="F:zinc ion binding"/>
    <property type="evidence" value="ECO:0007669"/>
    <property type="project" value="UniProtKB-KW"/>
</dbReference>
<dbReference type="GO" id="GO:0006886">
    <property type="term" value="P:intracellular protein transport"/>
    <property type="evidence" value="ECO:0007669"/>
    <property type="project" value="InterPro"/>
</dbReference>
<dbReference type="CDD" id="cd15752">
    <property type="entry name" value="FYVE_SlaC2-a"/>
    <property type="match status" value="1"/>
</dbReference>
<dbReference type="FunFam" id="3.30.40.10:FF:000018">
    <property type="entry name" value="Synaptotagmin-like 5, isoform CRA_a"/>
    <property type="match status" value="1"/>
</dbReference>
<dbReference type="Gene3D" id="3.30.40.10">
    <property type="entry name" value="Zinc/RING finger domain, C3HC4 (zinc finger)"/>
    <property type="match status" value="1"/>
</dbReference>
<dbReference type="InterPro" id="IPR041282">
    <property type="entry name" value="FYVE_2"/>
</dbReference>
<dbReference type="InterPro" id="IPR051745">
    <property type="entry name" value="Intracell_Transport_Effector"/>
</dbReference>
<dbReference type="InterPro" id="IPR037442">
    <property type="entry name" value="Melanophilin_FYVE-rel_dom"/>
</dbReference>
<dbReference type="InterPro" id="IPR006788">
    <property type="entry name" value="Myrip/Melanophilin"/>
</dbReference>
<dbReference type="InterPro" id="IPR010911">
    <property type="entry name" value="Rab_BD"/>
</dbReference>
<dbReference type="InterPro" id="IPR011011">
    <property type="entry name" value="Znf_FYVE_PHD"/>
</dbReference>
<dbReference type="InterPro" id="IPR013083">
    <property type="entry name" value="Znf_RING/FYVE/PHD"/>
</dbReference>
<dbReference type="PANTHER" id="PTHR14555:SF1">
    <property type="entry name" value="MELANOPHILIN"/>
    <property type="match status" value="1"/>
</dbReference>
<dbReference type="PANTHER" id="PTHR14555">
    <property type="entry name" value="MYELIN-ASSOCIATED OLIGODENDROCYTIC BASIC PROTEIN MOBP -RELATED"/>
    <property type="match status" value="1"/>
</dbReference>
<dbReference type="Pfam" id="PF02318">
    <property type="entry name" value="FYVE_2"/>
    <property type="match status" value="1"/>
</dbReference>
<dbReference type="Pfam" id="PF04698">
    <property type="entry name" value="Rab_eff_C"/>
    <property type="match status" value="1"/>
</dbReference>
<dbReference type="SUPFAM" id="SSF57903">
    <property type="entry name" value="FYVE/PHD zinc finger"/>
    <property type="match status" value="1"/>
</dbReference>
<dbReference type="PROSITE" id="PS50916">
    <property type="entry name" value="RABBD"/>
    <property type="match status" value="1"/>
</dbReference>
<keyword id="KW-0175">Coiled coil</keyword>
<keyword id="KW-0479">Metal-binding</keyword>
<keyword id="KW-1185">Reference proteome</keyword>
<keyword id="KW-0677">Repeat</keyword>
<keyword id="KW-0862">Zinc</keyword>
<keyword id="KW-0863">Zinc-finger</keyword>